<organism>
    <name type="scientific">Arabidopsis thaliana</name>
    <name type="common">Mouse-ear cress</name>
    <dbReference type="NCBI Taxonomy" id="3702"/>
    <lineage>
        <taxon>Eukaryota</taxon>
        <taxon>Viridiplantae</taxon>
        <taxon>Streptophyta</taxon>
        <taxon>Embryophyta</taxon>
        <taxon>Tracheophyta</taxon>
        <taxon>Spermatophyta</taxon>
        <taxon>Magnoliopsida</taxon>
        <taxon>eudicotyledons</taxon>
        <taxon>Gunneridae</taxon>
        <taxon>Pentapetalae</taxon>
        <taxon>rosids</taxon>
        <taxon>malvids</taxon>
        <taxon>Brassicales</taxon>
        <taxon>Brassicaceae</taxon>
        <taxon>Camelineae</taxon>
        <taxon>Arabidopsis</taxon>
    </lineage>
</organism>
<protein>
    <recommendedName>
        <fullName>Inositol-pentakisphosphate 2-kinase</fullName>
        <ecNumber>2.7.1.158</ecNumber>
    </recommendedName>
    <alternativeName>
        <fullName>Inositol-1,3,4,5,6-pentakisphosphate 2-kinase</fullName>
    </alternativeName>
    <alternativeName>
        <fullName>Ins(1,3,4,5,6)P5 2-kinase</fullName>
        <shortName>AtIPK1</shortName>
        <shortName>InsP5 2-kinase</shortName>
    </alternativeName>
</protein>
<comment type="function">
    <text evidence="1 2">Phosphorylates Ins(1,3,4,5,6)P5 at position 2 to form Ins(1,2,3,4,5,6)P6 (InsP6 or phytate). Phytate is a regulator of intracellular signaling, a highly abundant animal antinutrient, and a phosphate store in plant seeds. Also phosphorylates Ins(1,3,4,6)P4 and Ins(1,4,5,6)P4 to produce Ins(1,2,3,4,6)P5 and Ins(1,2,4,5,6)P5.</text>
</comment>
<comment type="catalytic activity">
    <reaction evidence="1 2">
        <text>1D-myo-inositol 1,3,4,5,6-pentakisphosphate + ATP = 1D-myo-inositol hexakisphosphate + ADP + H(+)</text>
        <dbReference type="Rhea" id="RHEA:20313"/>
        <dbReference type="ChEBI" id="CHEBI:15378"/>
        <dbReference type="ChEBI" id="CHEBI:30616"/>
        <dbReference type="ChEBI" id="CHEBI:57733"/>
        <dbReference type="ChEBI" id="CHEBI:58130"/>
        <dbReference type="ChEBI" id="CHEBI:456216"/>
        <dbReference type="EC" id="2.7.1.158"/>
    </reaction>
</comment>
<comment type="cofactor">
    <cofactor evidence="3 4 5 6">
        <name>Zn(2+)</name>
        <dbReference type="ChEBI" id="CHEBI:29105"/>
    </cofactor>
    <text evidence="3 4 5 6">Binds 1 zinc ion per subunit.</text>
</comment>
<comment type="biophysicochemical properties">
    <kinetics>
        <KM evidence="2">38 uM for Ins(1,3,4,5,6)P5 (in the presence of 0.4 mM ATP)</KM>
        <KM evidence="2">176 uM for Ins(1,3,4,5,6)P5 (in the presence of 0.4 uM ATP)</KM>
        <Vmax evidence="2">22.0 nmol/min/mg enzyme (in the presence of 0.4 mM ATP)</Vmax>
        <Vmax evidence="2">1.5 nmol/min/mg enzyme (in the presence of 0.4 uM ATP)</Vmax>
    </kinetics>
</comment>
<comment type="tissue specificity">
    <text evidence="2">Strongly expressed in leaves and cauline leaves. Weakly expressed in siliques and flowers. In flower, it is expressed in the major organs of developing flower buds. Strongly expressed in sepals, petals, in the male and female organs of immature and mature flower buds. Strongly expressed in the gynoecium and carpels which are fused to form the gynoecium. Also expressed in the transmitting tissue and ovules.</text>
</comment>
<comment type="domain">
    <text>The EXKPK motif is conserved in inositol-pentakisphosphate 2-kinases of both family 1 and 2.</text>
</comment>
<comment type="biotechnology">
    <text>The gene coding for this protein might be inactivated to commercially produce plants with phytate-free grain. Indeed, while the role of phytate (InsP6) accumulation in seeds is unknown, it causes nutritional and environmental problems, partly due to the inability of monogastric animals to digest it.</text>
</comment>
<comment type="similarity">
    <text evidence="7">Belongs to the IPK1 type 2 family.</text>
</comment>
<comment type="sequence caution" evidence="7">
    <conflict type="erroneous gene model prediction">
        <sequence resource="EMBL-CDS" id="BAB10637"/>
    </conflict>
</comment>
<dbReference type="EC" id="2.7.1.158"/>
<dbReference type="EMBL" id="DQ122931">
    <property type="protein sequence ID" value="AAZ99216.1"/>
    <property type="molecule type" value="mRNA"/>
</dbReference>
<dbReference type="EMBL" id="AB007647">
    <property type="protein sequence ID" value="BAB10637.1"/>
    <property type="status" value="ALT_SEQ"/>
    <property type="molecule type" value="Genomic_DNA"/>
</dbReference>
<dbReference type="EMBL" id="CP002688">
    <property type="protein sequence ID" value="AED94867.1"/>
    <property type="molecule type" value="Genomic_DNA"/>
</dbReference>
<dbReference type="EMBL" id="AY059898">
    <property type="protein sequence ID" value="AAL24380.1"/>
    <property type="molecule type" value="mRNA"/>
</dbReference>
<dbReference type="EMBL" id="AY093362">
    <property type="protein sequence ID" value="AAM13361.1"/>
    <property type="molecule type" value="mRNA"/>
</dbReference>
<dbReference type="RefSeq" id="NP_568613.1">
    <property type="nucleotide sequence ID" value="NM_123646.4"/>
</dbReference>
<dbReference type="PDB" id="2XAL">
    <property type="method" value="X-ray"/>
    <property type="resolution" value="3.20 A"/>
    <property type="chains" value="A/B=1-451"/>
</dbReference>
<dbReference type="PDB" id="2XAM">
    <property type="method" value="X-ray"/>
    <property type="resolution" value="2.20 A"/>
    <property type="chains" value="A/B=1-451"/>
</dbReference>
<dbReference type="PDB" id="2XAN">
    <property type="method" value="X-ray"/>
    <property type="resolution" value="2.20 A"/>
    <property type="chains" value="A/B=1-451"/>
</dbReference>
<dbReference type="PDB" id="2XAO">
    <property type="method" value="X-ray"/>
    <property type="resolution" value="2.90 A"/>
    <property type="chains" value="A/B=1-451"/>
</dbReference>
<dbReference type="PDB" id="2XAR">
    <property type="method" value="X-ray"/>
    <property type="resolution" value="3.10 A"/>
    <property type="chains" value="A/B=1-451"/>
</dbReference>
<dbReference type="PDB" id="3UDS">
    <property type="method" value="X-ray"/>
    <property type="resolution" value="3.10 A"/>
    <property type="chains" value="A/B=1-451"/>
</dbReference>
<dbReference type="PDB" id="3UDT">
    <property type="method" value="X-ray"/>
    <property type="resolution" value="3.10 A"/>
    <property type="chains" value="A/B=1-451"/>
</dbReference>
<dbReference type="PDB" id="3UDZ">
    <property type="method" value="X-ray"/>
    <property type="resolution" value="2.50 A"/>
    <property type="chains" value="A/B=1-451"/>
</dbReference>
<dbReference type="PDB" id="4AQK">
    <property type="method" value="X-ray"/>
    <property type="resolution" value="2.40 A"/>
    <property type="chains" value="A=1-451"/>
</dbReference>
<dbReference type="PDB" id="4AXC">
    <property type="method" value="X-ray"/>
    <property type="resolution" value="2.25 A"/>
    <property type="chains" value="A=1-451"/>
</dbReference>
<dbReference type="PDB" id="4AXD">
    <property type="method" value="X-ray"/>
    <property type="resolution" value="2.05 A"/>
    <property type="chains" value="A=1-451"/>
</dbReference>
<dbReference type="PDB" id="4AXE">
    <property type="method" value="X-ray"/>
    <property type="resolution" value="2.50 A"/>
    <property type="chains" value="A=1-451"/>
</dbReference>
<dbReference type="PDB" id="4AXF">
    <property type="method" value="X-ray"/>
    <property type="resolution" value="2.93 A"/>
    <property type="chains" value="A=1-451"/>
</dbReference>
<dbReference type="PDB" id="4LV7">
    <property type="method" value="X-ray"/>
    <property type="resolution" value="2.60 A"/>
    <property type="chains" value="A/B=1-451"/>
</dbReference>
<dbReference type="PDB" id="6FJK">
    <property type="method" value="X-ray"/>
    <property type="resolution" value="2.02 A"/>
    <property type="chains" value="A/B=1-451"/>
</dbReference>
<dbReference type="PDB" id="6FL3">
    <property type="method" value="X-ray"/>
    <property type="resolution" value="2.36 A"/>
    <property type="chains" value="A/B=1-451"/>
</dbReference>
<dbReference type="PDB" id="6FL8">
    <property type="method" value="X-ray"/>
    <property type="resolution" value="2.10 A"/>
    <property type="chains" value="A/B=1-451"/>
</dbReference>
<dbReference type="PDB" id="6GFG">
    <property type="method" value="X-ray"/>
    <property type="resolution" value="3.00 A"/>
    <property type="chains" value="A/B=1-451"/>
</dbReference>
<dbReference type="PDB" id="6GFH">
    <property type="method" value="X-ray"/>
    <property type="resolution" value="2.65 A"/>
    <property type="chains" value="A/B=1-451"/>
</dbReference>
<dbReference type="PDBsum" id="2XAL"/>
<dbReference type="PDBsum" id="2XAM"/>
<dbReference type="PDBsum" id="2XAN"/>
<dbReference type="PDBsum" id="2XAO"/>
<dbReference type="PDBsum" id="2XAR"/>
<dbReference type="PDBsum" id="3UDS"/>
<dbReference type="PDBsum" id="3UDT"/>
<dbReference type="PDBsum" id="3UDZ"/>
<dbReference type="PDBsum" id="4AQK"/>
<dbReference type="PDBsum" id="4AXC"/>
<dbReference type="PDBsum" id="4AXD"/>
<dbReference type="PDBsum" id="4AXE"/>
<dbReference type="PDBsum" id="4AXF"/>
<dbReference type="PDBsum" id="4LV7"/>
<dbReference type="PDBsum" id="6FJK"/>
<dbReference type="PDBsum" id="6FL3"/>
<dbReference type="PDBsum" id="6FL8"/>
<dbReference type="PDBsum" id="6GFG"/>
<dbReference type="PDBsum" id="6GFH"/>
<dbReference type="SMR" id="Q93YN9"/>
<dbReference type="BioGRID" id="19542">
    <property type="interactions" value="1"/>
</dbReference>
<dbReference type="FunCoup" id="Q93YN9">
    <property type="interactions" value="2850"/>
</dbReference>
<dbReference type="STRING" id="3702.Q93YN9"/>
<dbReference type="BindingDB" id="Q93YN9"/>
<dbReference type="iPTMnet" id="Q93YN9"/>
<dbReference type="PaxDb" id="3702-AT5G42810.1"/>
<dbReference type="ProteomicsDB" id="247034"/>
<dbReference type="DNASU" id="834292"/>
<dbReference type="EnsemblPlants" id="AT5G42810.1">
    <property type="protein sequence ID" value="AT5G42810.1"/>
    <property type="gene ID" value="AT5G42810"/>
</dbReference>
<dbReference type="GeneID" id="834292"/>
<dbReference type="Gramene" id="AT5G42810.1">
    <property type="protein sequence ID" value="AT5G42810.1"/>
    <property type="gene ID" value="AT5G42810"/>
</dbReference>
<dbReference type="KEGG" id="ath:AT5G42810"/>
<dbReference type="Araport" id="AT5G42810"/>
<dbReference type="TAIR" id="AT5G42810">
    <property type="gene designation" value="IPK1"/>
</dbReference>
<dbReference type="eggNOG" id="KOG4749">
    <property type="taxonomic scope" value="Eukaryota"/>
</dbReference>
<dbReference type="HOGENOM" id="CLU_033188_1_0_1"/>
<dbReference type="InParanoid" id="Q93YN9"/>
<dbReference type="OMA" id="HRQHCIV"/>
<dbReference type="PhylomeDB" id="Q93YN9"/>
<dbReference type="BRENDA" id="2.7.1.158">
    <property type="organism ID" value="399"/>
</dbReference>
<dbReference type="EvolutionaryTrace" id="Q93YN9"/>
<dbReference type="PRO" id="PR:Q93YN9"/>
<dbReference type="Proteomes" id="UP000006548">
    <property type="component" value="Chromosome 5"/>
</dbReference>
<dbReference type="ExpressionAtlas" id="Q93YN9">
    <property type="expression patterns" value="baseline and differential"/>
</dbReference>
<dbReference type="GO" id="GO:0005737">
    <property type="term" value="C:cytoplasm"/>
    <property type="evidence" value="ECO:0000314"/>
    <property type="project" value="TAIR"/>
</dbReference>
<dbReference type="GO" id="GO:0005634">
    <property type="term" value="C:nucleus"/>
    <property type="evidence" value="ECO:0000314"/>
    <property type="project" value="TAIR"/>
</dbReference>
<dbReference type="GO" id="GO:0005524">
    <property type="term" value="F:ATP binding"/>
    <property type="evidence" value="ECO:0007669"/>
    <property type="project" value="UniProtKB-KW"/>
</dbReference>
<dbReference type="GO" id="GO:0035299">
    <property type="term" value="F:inositol-1,3,4,5,6-pentakisphosphate 2-kinase activity"/>
    <property type="evidence" value="ECO:0000314"/>
    <property type="project" value="TAIR"/>
</dbReference>
<dbReference type="GO" id="GO:0102731">
    <property type="term" value="F:inositol-1,3,4,6-tetrakisphosphate 2-kinase activity"/>
    <property type="evidence" value="ECO:0000314"/>
    <property type="project" value="FlyBase"/>
</dbReference>
<dbReference type="GO" id="GO:0032942">
    <property type="term" value="F:inositol-1,4,5,6-tetrakisphosphate 2-kinase activity"/>
    <property type="evidence" value="ECO:0000314"/>
    <property type="project" value="TAIR"/>
</dbReference>
<dbReference type="GO" id="GO:0046872">
    <property type="term" value="F:metal ion binding"/>
    <property type="evidence" value="ECO:0007669"/>
    <property type="project" value="UniProtKB-KW"/>
</dbReference>
<dbReference type="GO" id="GO:0042742">
    <property type="term" value="P:defense response to bacterium"/>
    <property type="evidence" value="ECO:0000315"/>
    <property type="project" value="TAIR"/>
</dbReference>
<dbReference type="GO" id="GO:0050832">
    <property type="term" value="P:defense response to fungus"/>
    <property type="evidence" value="ECO:0000315"/>
    <property type="project" value="TAIR"/>
</dbReference>
<dbReference type="GO" id="GO:0051607">
    <property type="term" value="P:defense response to virus"/>
    <property type="evidence" value="ECO:0000315"/>
    <property type="project" value="TAIR"/>
</dbReference>
<dbReference type="GO" id="GO:0030643">
    <property type="term" value="P:intracellular phosphate ion homeostasis"/>
    <property type="evidence" value="ECO:0000315"/>
    <property type="project" value="TAIR"/>
</dbReference>
<dbReference type="GO" id="GO:0048527">
    <property type="term" value="P:lateral root development"/>
    <property type="evidence" value="ECO:0000315"/>
    <property type="project" value="TAIR"/>
</dbReference>
<dbReference type="GO" id="GO:0010264">
    <property type="term" value="P:myo-inositol hexakisphosphate biosynthetic process"/>
    <property type="evidence" value="ECO:0000315"/>
    <property type="project" value="TAIR"/>
</dbReference>
<dbReference type="GO" id="GO:0055062">
    <property type="term" value="P:phosphate ion homeostasis"/>
    <property type="evidence" value="ECO:0000315"/>
    <property type="project" value="TAIR"/>
</dbReference>
<dbReference type="FunFam" id="3.30.200.110:FF:000002">
    <property type="entry name" value="Inositol-pentakisphosphate 2-kinase"/>
    <property type="match status" value="1"/>
</dbReference>
<dbReference type="Gene3D" id="3.30.200.110">
    <property type="entry name" value="Inositol-pentakisphosphate 2-kinase, N-lobe"/>
    <property type="match status" value="1"/>
</dbReference>
<dbReference type="InterPro" id="IPR009286">
    <property type="entry name" value="Ins_P5_2-kin"/>
</dbReference>
<dbReference type="InterPro" id="IPR043001">
    <property type="entry name" value="IP5_2-K_N_lobe"/>
</dbReference>
<dbReference type="PANTHER" id="PTHR14456">
    <property type="entry name" value="INOSITOL POLYPHOSPHATE KINASE 1"/>
    <property type="match status" value="1"/>
</dbReference>
<dbReference type="PANTHER" id="PTHR14456:SF2">
    <property type="entry name" value="INOSITOL-PENTAKISPHOSPHATE 2-KINASE"/>
    <property type="match status" value="1"/>
</dbReference>
<dbReference type="Pfam" id="PF06090">
    <property type="entry name" value="Ins_P5_2-kin"/>
    <property type="match status" value="1"/>
</dbReference>
<keyword id="KW-0002">3D-structure</keyword>
<keyword id="KW-0007">Acetylation</keyword>
<keyword id="KW-0067">ATP-binding</keyword>
<keyword id="KW-0418">Kinase</keyword>
<keyword id="KW-0479">Metal-binding</keyword>
<keyword id="KW-0547">Nucleotide-binding</keyword>
<keyword id="KW-1185">Reference proteome</keyword>
<keyword id="KW-0808">Transferase</keyword>
<keyword id="KW-0862">Zinc</keyword>
<proteinExistence type="evidence at protein level"/>
<evidence type="ECO:0000269" key="1">
    <source>
    </source>
</evidence>
<evidence type="ECO:0000269" key="2">
    <source>
    </source>
</evidence>
<evidence type="ECO:0000269" key="3">
    <source>
    </source>
</evidence>
<evidence type="ECO:0000269" key="4">
    <source>
    </source>
</evidence>
<evidence type="ECO:0000269" key="5">
    <source>
    </source>
</evidence>
<evidence type="ECO:0000269" key="6">
    <source>
    </source>
</evidence>
<evidence type="ECO:0000305" key="7"/>
<evidence type="ECO:0000305" key="8">
    <source>
    </source>
</evidence>
<evidence type="ECO:0000305" key="9">
    <source>
    </source>
</evidence>
<evidence type="ECO:0000305" key="10">
    <source>
    </source>
</evidence>
<evidence type="ECO:0000305" key="11">
    <source>
    </source>
</evidence>
<evidence type="ECO:0007744" key="12">
    <source>
        <dbReference type="PDB" id="2XAL"/>
    </source>
</evidence>
<evidence type="ECO:0007744" key="13">
    <source>
        <dbReference type="PDB" id="2XAM"/>
    </source>
</evidence>
<evidence type="ECO:0007744" key="14">
    <source>
        <dbReference type="PDB" id="2XAN"/>
    </source>
</evidence>
<evidence type="ECO:0007744" key="15">
    <source>
        <dbReference type="PDB" id="2XAO"/>
    </source>
</evidence>
<evidence type="ECO:0007744" key="16">
    <source>
        <dbReference type="PDB" id="2XAR"/>
    </source>
</evidence>
<evidence type="ECO:0007744" key="17">
    <source>
        <dbReference type="PDB" id="3UDT"/>
    </source>
</evidence>
<evidence type="ECO:0007744" key="18">
    <source>
        <dbReference type="PDB" id="3UDZ"/>
    </source>
</evidence>
<evidence type="ECO:0007744" key="19">
    <source>
        <dbReference type="PDB" id="4AQK"/>
    </source>
</evidence>
<evidence type="ECO:0007744" key="20">
    <source>
        <dbReference type="PDB" id="4AXC"/>
    </source>
</evidence>
<evidence type="ECO:0007744" key="21">
    <source>
        <dbReference type="PDB" id="4AXD"/>
    </source>
</evidence>
<evidence type="ECO:0007744" key="22">
    <source>
        <dbReference type="PDB" id="4AXE"/>
    </source>
</evidence>
<evidence type="ECO:0007744" key="23">
    <source>
        <dbReference type="PDB" id="4AXF"/>
    </source>
</evidence>
<evidence type="ECO:0007744" key="24">
    <source>
        <dbReference type="PDB" id="4LV7"/>
    </source>
</evidence>
<evidence type="ECO:0007744" key="25">
    <source>
    </source>
</evidence>
<evidence type="ECO:0007829" key="26">
    <source>
        <dbReference type="PDB" id="2XAM"/>
    </source>
</evidence>
<evidence type="ECO:0007829" key="27">
    <source>
        <dbReference type="PDB" id="4AQK"/>
    </source>
</evidence>
<evidence type="ECO:0007829" key="28">
    <source>
        <dbReference type="PDB" id="4AXD"/>
    </source>
</evidence>
<evidence type="ECO:0007829" key="29">
    <source>
        <dbReference type="PDB" id="4AXF"/>
    </source>
</evidence>
<evidence type="ECO:0007829" key="30">
    <source>
        <dbReference type="PDB" id="6FJK"/>
    </source>
</evidence>
<evidence type="ECO:0007829" key="31">
    <source>
        <dbReference type="PDB" id="6FL8"/>
    </source>
</evidence>
<sequence>MEMILEEKDASDWIYRGEGGANLVLAYAGSSPLFVGKVIRIQKARRNDKAIKNANGVVSVLTSDEQHLWRENNELISSPNKEVLEQRYVKNVIIPLLGPKHVDAGVRVSVSKEFLECVDKKVTKQRPLWRVNAANVDTSHDSALILNDHSLFSQGISSGGDCISVEIKPKCGFLPTSRFIGKENMLKTSVSRFKMHQLLKLEYNEISEESEYDPLDLFSGSKESVLEAIKALYSTPQNNFRVFLNGSLILGGSGESTGRTSPEIGYAFEDALKGFIQSEDGHRTECFLQLVSDAVYGSGVLDRLLEIQKLDKLDIEGAIHSYYDLINQPCPICKEGKPLEAELSLHALPLDESLKIVKEYLIAATAKDCSIMISFQSRNAWDSEPSGDYVSLKPTNQTFDYKVHFIDLSLKPLKRMESYYKLDKKIISFYNRKQKAENTAEQIGNSKPSHS</sequence>
<gene>
    <name type="primary">IPK1</name>
    <name type="ordered locus">At5g42810</name>
    <name type="ORF">MJB21.19</name>
</gene>
<feature type="chain" id="PRO_0000110534" description="Inositol-pentakisphosphate 2-kinase">
    <location>
        <begin position="1"/>
        <end position="451"/>
    </location>
</feature>
<feature type="short sequence motif" description="EXKPK motif">
    <location>
        <begin position="166"/>
        <end position="170"/>
    </location>
</feature>
<feature type="binding site" evidence="8 11">
    <location>
        <begin position="19"/>
        <end position="22"/>
    </location>
    <ligand>
        <name>ATP</name>
        <dbReference type="ChEBI" id="CHEBI:30616"/>
    </ligand>
</feature>
<feature type="binding site" evidence="8 11">
    <location>
        <position position="40"/>
    </location>
    <ligand>
        <name>ATP</name>
        <dbReference type="ChEBI" id="CHEBI:30616"/>
    </ligand>
</feature>
<feature type="binding site" evidence="8 9 10 11">
    <location>
        <position position="45"/>
    </location>
    <ligand>
        <name>substrate</name>
    </ligand>
</feature>
<feature type="binding site" evidence="8 9 10 11">
    <location>
        <position position="130"/>
    </location>
    <ligand>
        <name>substrate</name>
    </ligand>
</feature>
<feature type="binding site" evidence="8 11">
    <location>
        <begin position="147"/>
        <end position="149"/>
    </location>
    <ligand>
        <name>ATP</name>
        <dbReference type="ChEBI" id="CHEBI:30616"/>
    </ligand>
</feature>
<feature type="binding site" evidence="8 11">
    <location>
        <begin position="166"/>
        <end position="168"/>
    </location>
    <ligand>
        <name>ATP</name>
        <dbReference type="ChEBI" id="CHEBI:30616"/>
    </ligand>
</feature>
<feature type="binding site" evidence="8 9 10 11">
    <location>
        <position position="170"/>
    </location>
    <ligand>
        <name>substrate</name>
    </ligand>
</feature>
<feature type="binding site" evidence="8 9 10 11">
    <location>
        <position position="200"/>
    </location>
    <ligand>
        <name>substrate</name>
    </ligand>
</feature>
<feature type="binding site" evidence="8 9 10 11">
    <location>
        <position position="238"/>
    </location>
    <ligand>
        <name>substrate</name>
    </ligand>
</feature>
<feature type="binding site" evidence="11">
    <location>
        <position position="241"/>
    </location>
    <ligand>
        <name>ATP</name>
        <dbReference type="ChEBI" id="CHEBI:30616"/>
    </ligand>
</feature>
<feature type="binding site" evidence="12 13 14 15 16 17 18 19 20 21 22 23 24">
    <location>
        <position position="320"/>
    </location>
    <ligand>
        <name>Zn(2+)</name>
        <dbReference type="ChEBI" id="CHEBI:29105"/>
    </ligand>
</feature>
<feature type="binding site" evidence="12 13 14 15 16 17 18 19 20 21 22 23 24">
    <location>
        <position position="330"/>
    </location>
    <ligand>
        <name>Zn(2+)</name>
        <dbReference type="ChEBI" id="CHEBI:29105"/>
    </ligand>
</feature>
<feature type="binding site" evidence="12 13 14 15 16 17 19 20 21 22 23 24">
    <location>
        <position position="333"/>
    </location>
    <ligand>
        <name>Zn(2+)</name>
        <dbReference type="ChEBI" id="CHEBI:29105"/>
    </ligand>
</feature>
<feature type="binding site" evidence="12 13 14 15 16 17 18 19 20 21 22 23 24">
    <location>
        <position position="346"/>
    </location>
    <ligand>
        <name>Zn(2+)</name>
        <dbReference type="ChEBI" id="CHEBI:29105"/>
    </ligand>
</feature>
<feature type="binding site" evidence="8 9 10 11">
    <location>
        <position position="368"/>
    </location>
    <ligand>
        <name>substrate</name>
    </ligand>
</feature>
<feature type="binding site" evidence="8 11">
    <location>
        <position position="407"/>
    </location>
    <ligand>
        <name>ATP</name>
        <dbReference type="ChEBI" id="CHEBI:30616"/>
    </ligand>
</feature>
<feature type="binding site" evidence="8 9 10 11">
    <location>
        <position position="411"/>
    </location>
    <ligand>
        <name>substrate</name>
    </ligand>
</feature>
<feature type="binding site" evidence="8 9 10 11">
    <location>
        <position position="415"/>
    </location>
    <ligand>
        <name>substrate</name>
    </ligand>
</feature>
<feature type="binding site" evidence="8 9 10 11">
    <location>
        <position position="419"/>
    </location>
    <ligand>
        <name>substrate</name>
    </ligand>
</feature>
<feature type="modified residue" description="N-acetylmethionine" evidence="25">
    <location>
        <position position="1"/>
    </location>
</feature>
<feature type="helix" evidence="30">
    <location>
        <begin position="7"/>
        <end position="12"/>
    </location>
</feature>
<feature type="strand" evidence="30">
    <location>
        <begin position="13"/>
        <end position="18"/>
    </location>
</feature>
<feature type="strand" evidence="30">
    <location>
        <begin position="20"/>
        <end position="27"/>
    </location>
</feature>
<feature type="turn" evidence="30">
    <location>
        <begin position="32"/>
        <end position="36"/>
    </location>
</feature>
<feature type="strand" evidence="30">
    <location>
        <begin position="37"/>
        <end position="45"/>
    </location>
</feature>
<feature type="helix" evidence="28">
    <location>
        <begin position="49"/>
        <end position="51"/>
    </location>
</feature>
<feature type="helix" evidence="30">
    <location>
        <begin position="63"/>
        <end position="68"/>
    </location>
</feature>
<feature type="turn" evidence="30">
    <location>
        <begin position="69"/>
        <end position="71"/>
    </location>
</feature>
<feature type="helix" evidence="30">
    <location>
        <begin position="73"/>
        <end position="77"/>
    </location>
</feature>
<feature type="helix" evidence="30">
    <location>
        <begin position="81"/>
        <end position="91"/>
    </location>
</feature>
<feature type="helix" evidence="30">
    <location>
        <begin position="94"/>
        <end position="97"/>
    </location>
</feature>
<feature type="strand" evidence="31">
    <location>
        <begin position="99"/>
        <end position="101"/>
    </location>
</feature>
<feature type="strand" evidence="30">
    <location>
        <begin position="106"/>
        <end position="110"/>
    </location>
</feature>
<feature type="helix" evidence="30">
    <location>
        <begin position="112"/>
        <end position="122"/>
    </location>
</feature>
<feature type="helix" evidence="30">
    <location>
        <begin position="123"/>
        <end position="125"/>
    </location>
</feature>
<feature type="helix" evidence="30">
    <location>
        <begin position="128"/>
        <end position="133"/>
    </location>
</feature>
<feature type="strand" evidence="30">
    <location>
        <begin position="134"/>
        <end position="136"/>
    </location>
</feature>
<feature type="strand" evidence="30">
    <location>
        <begin position="141"/>
        <end position="147"/>
    </location>
</feature>
<feature type="strand" evidence="28">
    <location>
        <begin position="152"/>
        <end position="155"/>
    </location>
</feature>
<feature type="strand" evidence="30">
    <location>
        <begin position="163"/>
        <end position="167"/>
    </location>
</feature>
<feature type="helix" evidence="27">
    <location>
        <begin position="177"/>
        <end position="179"/>
    </location>
</feature>
<feature type="helix" evidence="30">
    <location>
        <begin position="182"/>
        <end position="188"/>
    </location>
</feature>
<feature type="helix" evidence="30">
    <location>
        <begin position="192"/>
        <end position="202"/>
    </location>
</feature>
<feature type="strand" evidence="28">
    <location>
        <begin position="205"/>
        <end position="208"/>
    </location>
</feature>
<feature type="helix" evidence="30">
    <location>
        <begin position="214"/>
        <end position="217"/>
    </location>
</feature>
<feature type="helix" evidence="30">
    <location>
        <begin position="222"/>
        <end position="234"/>
    </location>
</feature>
<feature type="turn" evidence="28">
    <location>
        <begin position="237"/>
        <end position="239"/>
    </location>
</feature>
<feature type="strand" evidence="30">
    <location>
        <begin position="240"/>
        <end position="244"/>
    </location>
</feature>
<feature type="strand" evidence="30">
    <location>
        <begin position="247"/>
        <end position="251"/>
    </location>
</feature>
<feature type="strand" evidence="30">
    <location>
        <begin position="253"/>
        <end position="255"/>
    </location>
</feature>
<feature type="helix" evidence="30">
    <location>
        <begin position="262"/>
        <end position="271"/>
    </location>
</feature>
<feature type="turn" evidence="26">
    <location>
        <begin position="272"/>
        <end position="275"/>
    </location>
</feature>
<feature type="turn" evidence="28">
    <location>
        <begin position="280"/>
        <end position="282"/>
    </location>
</feature>
<feature type="helix" evidence="30">
    <location>
        <begin position="283"/>
        <end position="298"/>
    </location>
</feature>
<feature type="helix" evidence="30">
    <location>
        <begin position="300"/>
        <end position="308"/>
    </location>
</feature>
<feature type="helix" evidence="30">
    <location>
        <begin position="315"/>
        <end position="325"/>
    </location>
</feature>
<feature type="turn" evidence="28">
    <location>
        <begin position="331"/>
        <end position="335"/>
    </location>
</feature>
<feature type="helix" evidence="29">
    <location>
        <begin position="338"/>
        <end position="340"/>
    </location>
</feature>
<feature type="helix" evidence="30">
    <location>
        <begin position="344"/>
        <end position="347"/>
    </location>
</feature>
<feature type="helix" evidence="30">
    <location>
        <begin position="350"/>
        <end position="367"/>
    </location>
</feature>
<feature type="strand" evidence="30">
    <location>
        <begin position="370"/>
        <end position="377"/>
    </location>
</feature>
<feature type="strand" evidence="30">
    <location>
        <begin position="388"/>
        <end position="392"/>
    </location>
</feature>
<feature type="turn" evidence="30">
    <location>
        <begin position="393"/>
        <end position="396"/>
    </location>
</feature>
<feature type="strand" evidence="30">
    <location>
        <begin position="397"/>
        <end position="406"/>
    </location>
</feature>
<feature type="helix" evidence="30">
    <location>
        <begin position="415"/>
        <end position="435"/>
    </location>
</feature>
<reference key="1">
    <citation type="journal article" date="2005" name="Proc. Natl. Acad. Sci. U.S.A.">
        <title>Generation of phytate-free seeds in Arabidopsis through disruption of inositol polyphosphate kinases.</title>
        <authorList>
            <person name="Stevenson-Paulik J."/>
            <person name="Bastidas R.J."/>
            <person name="Chiou S.-T."/>
            <person name="Frye R.A."/>
            <person name="York J.D."/>
        </authorList>
    </citation>
    <scope>NUCLEOTIDE SEQUENCE [MRNA]</scope>
    <scope>FUNCTION</scope>
    <scope>ENZYME ACTIVITY</scope>
</reference>
<reference key="2">
    <citation type="journal article" date="1997" name="DNA Res.">
        <title>Structural analysis of Arabidopsis thaliana chromosome 5. III. Sequence features of the regions of 1,191,918 bp covered by seventeen physically assigned P1 clones.</title>
        <authorList>
            <person name="Nakamura Y."/>
            <person name="Sato S."/>
            <person name="Kaneko T."/>
            <person name="Kotani H."/>
            <person name="Asamizu E."/>
            <person name="Miyajima N."/>
            <person name="Tabata S."/>
        </authorList>
    </citation>
    <scope>NUCLEOTIDE SEQUENCE [LARGE SCALE GENOMIC DNA]</scope>
    <source>
        <strain>cv. Columbia</strain>
    </source>
</reference>
<reference key="3">
    <citation type="journal article" date="2017" name="Plant J.">
        <title>Araport11: a complete reannotation of the Arabidopsis thaliana reference genome.</title>
        <authorList>
            <person name="Cheng C.Y."/>
            <person name="Krishnakumar V."/>
            <person name="Chan A.P."/>
            <person name="Thibaud-Nissen F."/>
            <person name="Schobel S."/>
            <person name="Town C.D."/>
        </authorList>
    </citation>
    <scope>GENOME REANNOTATION</scope>
    <source>
        <strain>cv. Columbia</strain>
    </source>
</reference>
<reference key="4">
    <citation type="journal article" date="2003" name="Science">
        <title>Empirical analysis of transcriptional activity in the Arabidopsis genome.</title>
        <authorList>
            <person name="Yamada K."/>
            <person name="Lim J."/>
            <person name="Dale J.M."/>
            <person name="Chen H."/>
            <person name="Shinn P."/>
            <person name="Palm C.J."/>
            <person name="Southwick A.M."/>
            <person name="Wu H.C."/>
            <person name="Kim C.J."/>
            <person name="Nguyen M."/>
            <person name="Pham P.K."/>
            <person name="Cheuk R.F."/>
            <person name="Karlin-Newmann G."/>
            <person name="Liu S.X."/>
            <person name="Lam B."/>
            <person name="Sakano H."/>
            <person name="Wu T."/>
            <person name="Yu G."/>
            <person name="Miranda M."/>
            <person name="Quach H.L."/>
            <person name="Tripp M."/>
            <person name="Chang C.H."/>
            <person name="Lee J.M."/>
            <person name="Toriumi M.J."/>
            <person name="Chan M.M."/>
            <person name="Tang C.C."/>
            <person name="Onodera C.S."/>
            <person name="Deng J.M."/>
            <person name="Akiyama K."/>
            <person name="Ansari Y."/>
            <person name="Arakawa T."/>
            <person name="Banh J."/>
            <person name="Banno F."/>
            <person name="Bowser L."/>
            <person name="Brooks S.Y."/>
            <person name="Carninci P."/>
            <person name="Chao Q."/>
            <person name="Choy N."/>
            <person name="Enju A."/>
            <person name="Goldsmith A.D."/>
            <person name="Gurjal M."/>
            <person name="Hansen N.F."/>
            <person name="Hayashizaki Y."/>
            <person name="Johnson-Hopson C."/>
            <person name="Hsuan V.W."/>
            <person name="Iida K."/>
            <person name="Karnes M."/>
            <person name="Khan S."/>
            <person name="Koesema E."/>
            <person name="Ishida J."/>
            <person name="Jiang P.X."/>
            <person name="Jones T."/>
            <person name="Kawai J."/>
            <person name="Kamiya A."/>
            <person name="Meyers C."/>
            <person name="Nakajima M."/>
            <person name="Narusaka M."/>
            <person name="Seki M."/>
            <person name="Sakurai T."/>
            <person name="Satou M."/>
            <person name="Tamse R."/>
            <person name="Vaysberg M."/>
            <person name="Wallender E.K."/>
            <person name="Wong C."/>
            <person name="Yamamura Y."/>
            <person name="Yuan S."/>
            <person name="Shinozaki K."/>
            <person name="Davis R.W."/>
            <person name="Theologis A."/>
            <person name="Ecker J.R."/>
        </authorList>
    </citation>
    <scope>NUCLEOTIDE SEQUENCE [LARGE SCALE MRNA]</scope>
    <source>
        <strain>cv. Columbia</strain>
    </source>
</reference>
<reference key="5">
    <citation type="journal article" date="2006" name="Biochem. J.">
        <title>Characterization of an Arabidopsis inositol 1,3,4,5,6-pentakisphosphate 2-kinase (AtIPK1).</title>
        <authorList>
            <person name="Sweetman D."/>
            <person name="Johnson S."/>
            <person name="Caddick S.E.K."/>
            <person name="Hanke D.E."/>
            <person name="Brearley C.A."/>
        </authorList>
    </citation>
    <scope>FUNCTION</scope>
    <scope>ENZYME ACTIVITY</scope>
    <scope>BIOPHYSICOCHEMICAL PROPERTIES</scope>
    <scope>TISSUE SPECIFICITY</scope>
</reference>
<reference key="6">
    <citation type="journal article" date="2012" name="Mol. Cell. Proteomics">
        <title>Comparative large-scale characterisation of plant vs. mammal proteins reveals similar and idiosyncratic N-alpha acetylation features.</title>
        <authorList>
            <person name="Bienvenut W.V."/>
            <person name="Sumpton D."/>
            <person name="Martinez A."/>
            <person name="Lilla S."/>
            <person name="Espagne C."/>
            <person name="Meinnel T."/>
            <person name="Giglione C."/>
        </authorList>
    </citation>
    <scope>ACETYLATION [LARGE SCALE ANALYSIS] AT MET-1</scope>
    <scope>IDENTIFICATION BY MASS SPECTROMETRY [LARGE SCALE ANALYSIS]</scope>
</reference>
<reference key="7">
    <citation type="journal article" date="2010" name="Proc. Natl. Acad. Sci. U.S.A.">
        <title>Inositol 1,3,4,5,6-pentakisphosphate 2-kinase is a distant IPK member with a singular inositide binding site for axial 2-OH recognition.</title>
        <authorList>
            <person name="Gonzalez B."/>
            <person name="Banos-Sanz J.I."/>
            <person name="Villate M."/>
            <person name="Brearley C.A."/>
            <person name="Sanz-Aparicio J."/>
        </authorList>
    </citation>
    <scope>X-RAY CRYSTALLOGRAPHY (2.20 ANGSTROMS) IN COMPLEX WITH ADP; ATP ANALOG; SUBSTRATE AND ZINC</scope>
</reference>
<reference key="8">
    <citation type="journal article" date="2012" name="Acta Crystallogr. F">
        <title>Expression, purification, crystallization and preliminary X-ray diffraction analysis of the apo form of InsP5 2-K from Arabidopsis thaliana.</title>
        <authorList>
            <person name="Banos-Sanz J.I."/>
            <person name="Sanz-Aparicio J."/>
            <person name="Brearley C.A."/>
            <person name="Gonzalez B."/>
        </authorList>
    </citation>
    <scope>X-RAY CRYSTALLOGRAPHY (2.40 ANGSTROMS) IN COMPLEX WITH ADP; SUBSTRATE AND ZINC</scope>
</reference>
<reference key="9">
    <citation type="journal article" date="2012" name="J. Biol. Chem.">
        <title>Conformational changes in inositol 1,3,4,5,6-pentakisphosphate 2-kinase upon substrate binding: role of N-terminal lobe and enantiomeric substrate preference.</title>
        <authorList>
            <person name="Banos-Sanz J.I."/>
            <person name="Sanz-Aparicio J."/>
            <person name="Whitfield H."/>
            <person name="Hamilton C."/>
            <person name="Brearley C.A."/>
            <person name="Gonzalez B."/>
        </authorList>
    </citation>
    <scope>X-RAY CRYSTALLOGRAPHY (2.05 ANGSTROMS) IN COMPLEX WITH ADP; ATP ANALOG; SUBSTRATE AND ZINC</scope>
</reference>
<reference key="10">
    <citation type="journal article" date="2012" name="Protein Sci.">
        <title>Inositol phosphate-induced stabilization of inositol 1,3,4,5,6-pentakisphosphate 2-kinase and its role in substrate specificity.</title>
        <authorList>
            <person name="Gosein V."/>
            <person name="Leung T.F."/>
            <person name="Krajden O."/>
            <person name="Miller G.J."/>
        </authorList>
    </citation>
    <scope>X-RAY CRYSTALLOGRAPHY (2.50 ANGSTROMS) IN COMPLEX WITH ADP; SUBSTRATE AND ZINC</scope>
</reference>
<name>IPPK_ARATH</name>
<accession>Q93YN9</accession>
<accession>Q9FMY6</accession>